<dbReference type="EMBL" id="CP000142">
    <property type="protein sequence ID" value="ABA87964.1"/>
    <property type="molecule type" value="Genomic_DNA"/>
</dbReference>
<dbReference type="RefSeq" id="WP_011340407.1">
    <property type="nucleotide sequence ID" value="NC_007498.2"/>
</dbReference>
<dbReference type="SMR" id="Q3A6P3"/>
<dbReference type="STRING" id="338963.Pcar_0705"/>
<dbReference type="KEGG" id="pca:Pcar_0705"/>
<dbReference type="eggNOG" id="COG0185">
    <property type="taxonomic scope" value="Bacteria"/>
</dbReference>
<dbReference type="HOGENOM" id="CLU_144911_0_1_7"/>
<dbReference type="OrthoDB" id="9797833at2"/>
<dbReference type="Proteomes" id="UP000002534">
    <property type="component" value="Chromosome"/>
</dbReference>
<dbReference type="GO" id="GO:0005737">
    <property type="term" value="C:cytoplasm"/>
    <property type="evidence" value="ECO:0007669"/>
    <property type="project" value="UniProtKB-ARBA"/>
</dbReference>
<dbReference type="GO" id="GO:0015935">
    <property type="term" value="C:small ribosomal subunit"/>
    <property type="evidence" value="ECO:0007669"/>
    <property type="project" value="InterPro"/>
</dbReference>
<dbReference type="GO" id="GO:0019843">
    <property type="term" value="F:rRNA binding"/>
    <property type="evidence" value="ECO:0007669"/>
    <property type="project" value="UniProtKB-UniRule"/>
</dbReference>
<dbReference type="GO" id="GO:0003735">
    <property type="term" value="F:structural constituent of ribosome"/>
    <property type="evidence" value="ECO:0007669"/>
    <property type="project" value="InterPro"/>
</dbReference>
<dbReference type="GO" id="GO:0000028">
    <property type="term" value="P:ribosomal small subunit assembly"/>
    <property type="evidence" value="ECO:0007669"/>
    <property type="project" value="TreeGrafter"/>
</dbReference>
<dbReference type="GO" id="GO:0006412">
    <property type="term" value="P:translation"/>
    <property type="evidence" value="ECO:0007669"/>
    <property type="project" value="UniProtKB-UniRule"/>
</dbReference>
<dbReference type="FunFam" id="3.30.860.10:FF:000001">
    <property type="entry name" value="30S ribosomal protein S19"/>
    <property type="match status" value="1"/>
</dbReference>
<dbReference type="Gene3D" id="3.30.860.10">
    <property type="entry name" value="30s Ribosomal Protein S19, Chain A"/>
    <property type="match status" value="1"/>
</dbReference>
<dbReference type="HAMAP" id="MF_00531">
    <property type="entry name" value="Ribosomal_uS19"/>
    <property type="match status" value="1"/>
</dbReference>
<dbReference type="InterPro" id="IPR002222">
    <property type="entry name" value="Ribosomal_uS19"/>
</dbReference>
<dbReference type="InterPro" id="IPR005732">
    <property type="entry name" value="Ribosomal_uS19_bac-type"/>
</dbReference>
<dbReference type="InterPro" id="IPR020934">
    <property type="entry name" value="Ribosomal_uS19_CS"/>
</dbReference>
<dbReference type="InterPro" id="IPR023575">
    <property type="entry name" value="Ribosomal_uS19_SF"/>
</dbReference>
<dbReference type="NCBIfam" id="TIGR01050">
    <property type="entry name" value="rpsS_bact"/>
    <property type="match status" value="1"/>
</dbReference>
<dbReference type="PANTHER" id="PTHR11880">
    <property type="entry name" value="RIBOSOMAL PROTEIN S19P FAMILY MEMBER"/>
    <property type="match status" value="1"/>
</dbReference>
<dbReference type="PANTHER" id="PTHR11880:SF8">
    <property type="entry name" value="SMALL RIBOSOMAL SUBUNIT PROTEIN US19M"/>
    <property type="match status" value="1"/>
</dbReference>
<dbReference type="Pfam" id="PF00203">
    <property type="entry name" value="Ribosomal_S19"/>
    <property type="match status" value="1"/>
</dbReference>
<dbReference type="PIRSF" id="PIRSF002144">
    <property type="entry name" value="Ribosomal_S19"/>
    <property type="match status" value="1"/>
</dbReference>
<dbReference type="PRINTS" id="PR00975">
    <property type="entry name" value="RIBOSOMALS19"/>
</dbReference>
<dbReference type="SUPFAM" id="SSF54570">
    <property type="entry name" value="Ribosomal protein S19"/>
    <property type="match status" value="1"/>
</dbReference>
<dbReference type="PROSITE" id="PS00323">
    <property type="entry name" value="RIBOSOMAL_S19"/>
    <property type="match status" value="1"/>
</dbReference>
<feature type="chain" id="PRO_0000265395" description="Small ribosomal subunit protein uS19">
    <location>
        <begin position="1"/>
        <end position="91"/>
    </location>
</feature>
<organism>
    <name type="scientific">Syntrophotalea carbinolica (strain DSM 2380 / NBRC 103641 / GraBd1)</name>
    <name type="common">Pelobacter carbinolicus</name>
    <dbReference type="NCBI Taxonomy" id="338963"/>
    <lineage>
        <taxon>Bacteria</taxon>
        <taxon>Pseudomonadati</taxon>
        <taxon>Thermodesulfobacteriota</taxon>
        <taxon>Desulfuromonadia</taxon>
        <taxon>Desulfuromonadales</taxon>
        <taxon>Syntrophotaleaceae</taxon>
        <taxon>Syntrophotalea</taxon>
    </lineage>
</organism>
<sequence length="91" mass="10206">MARSIKKGPYVEESLLRKADFEGGAGSKKVIKTWSRRSTIIPEFVGYTFAVHNGKKFIPVFVTENMVGHKLGEFAPTRTYYGHGADKKGKR</sequence>
<keyword id="KW-1185">Reference proteome</keyword>
<keyword id="KW-0687">Ribonucleoprotein</keyword>
<keyword id="KW-0689">Ribosomal protein</keyword>
<keyword id="KW-0694">RNA-binding</keyword>
<keyword id="KW-0699">rRNA-binding</keyword>
<gene>
    <name evidence="1" type="primary">rpsS</name>
    <name type="ordered locus">Pcar_0705</name>
</gene>
<comment type="function">
    <text evidence="1">Protein S19 forms a complex with S13 that binds strongly to the 16S ribosomal RNA.</text>
</comment>
<comment type="similarity">
    <text evidence="1">Belongs to the universal ribosomal protein uS19 family.</text>
</comment>
<accession>Q3A6P3</accession>
<protein>
    <recommendedName>
        <fullName evidence="1">Small ribosomal subunit protein uS19</fullName>
    </recommendedName>
    <alternativeName>
        <fullName evidence="2">30S ribosomal protein S19</fullName>
    </alternativeName>
</protein>
<name>RS19_SYNC1</name>
<proteinExistence type="inferred from homology"/>
<evidence type="ECO:0000255" key="1">
    <source>
        <dbReference type="HAMAP-Rule" id="MF_00531"/>
    </source>
</evidence>
<evidence type="ECO:0000305" key="2"/>
<reference key="1">
    <citation type="submission" date="2005-10" db="EMBL/GenBank/DDBJ databases">
        <title>Complete sequence of Pelobacter carbinolicus DSM 2380.</title>
        <authorList>
            <person name="Copeland A."/>
            <person name="Lucas S."/>
            <person name="Lapidus A."/>
            <person name="Barry K."/>
            <person name="Detter J.C."/>
            <person name="Glavina T."/>
            <person name="Hammon N."/>
            <person name="Israni S."/>
            <person name="Pitluck S."/>
            <person name="Chertkov O."/>
            <person name="Schmutz J."/>
            <person name="Larimer F."/>
            <person name="Land M."/>
            <person name="Kyrpides N."/>
            <person name="Ivanova N."/>
            <person name="Richardson P."/>
        </authorList>
    </citation>
    <scope>NUCLEOTIDE SEQUENCE [LARGE SCALE GENOMIC DNA]</scope>
    <source>
        <strain>DSM 2380 / NBRC 103641 / GraBd1</strain>
    </source>
</reference>